<keyword id="KW-0963">Cytoplasm</keyword>
<keyword id="KW-0255">Endonuclease</keyword>
<keyword id="KW-0378">Hydrolase</keyword>
<keyword id="KW-0460">Magnesium</keyword>
<keyword id="KW-0479">Metal-binding</keyword>
<keyword id="KW-0507">mRNA processing</keyword>
<keyword id="KW-0540">Nuclease</keyword>
<keyword id="KW-0694">RNA-binding</keyword>
<keyword id="KW-0698">rRNA processing</keyword>
<keyword id="KW-0699">rRNA-binding</keyword>
<keyword id="KW-0819">tRNA processing</keyword>
<organism>
    <name type="scientific">Francisella philomiragia subsp. philomiragia (strain ATCC 25017 / CCUG 19701 / FSC 153 / O#319-036)</name>
    <dbReference type="NCBI Taxonomy" id="484022"/>
    <lineage>
        <taxon>Bacteria</taxon>
        <taxon>Pseudomonadati</taxon>
        <taxon>Pseudomonadota</taxon>
        <taxon>Gammaproteobacteria</taxon>
        <taxon>Thiotrichales</taxon>
        <taxon>Francisellaceae</taxon>
        <taxon>Francisella</taxon>
    </lineage>
</organism>
<proteinExistence type="inferred from homology"/>
<sequence length="230" mass="26156">MVPEYSRLYKILGYSFKNYTLLVRALTHRSKTKKNYERLEFLGDSILGFVIAEVLYMEFPDLAEGKLSQIRSKLVKGVTLANLALNFKLDEYIILGASEQGGHKREKILEDVFEAIIGAIYLDSDFATVKKVIVNWYKPVISTLNLDDVKVKDSKSKLQEILLQNGLSLPEYSIETIDGKDHEQEFTVKALSNDLNIEVRAKGTSRKKAEQKAAEKMIQILSQQGLHEKK</sequence>
<reference key="1">
    <citation type="submission" date="2007-12" db="EMBL/GenBank/DDBJ databases">
        <title>Complete sequence of chromosome of Francisella philomiragia subsp. philomiragia ATCC 25017.</title>
        <authorList>
            <consortium name="US DOE Joint Genome Institute"/>
            <person name="Copeland A."/>
            <person name="Lucas S."/>
            <person name="Lapidus A."/>
            <person name="Barry K."/>
            <person name="Detter J.C."/>
            <person name="Glavina del Rio T."/>
            <person name="Hammon N."/>
            <person name="Israni S."/>
            <person name="Dalin E."/>
            <person name="Tice H."/>
            <person name="Pitluck S."/>
            <person name="Chain P."/>
            <person name="Malfatti S."/>
            <person name="Shin M."/>
            <person name="Vergez L."/>
            <person name="Schmutz J."/>
            <person name="Larimer F."/>
            <person name="Land M."/>
            <person name="Hauser L."/>
            <person name="Richardson P."/>
        </authorList>
    </citation>
    <scope>NUCLEOTIDE SEQUENCE [LARGE SCALE GENOMIC DNA]</scope>
    <source>
        <strain>ATCC 25017 / CCUG 19701 / FSC 153 / O#319-036</strain>
    </source>
</reference>
<comment type="function">
    <text evidence="1">Digests double-stranded RNA. Involved in the processing of primary rRNA transcript to yield the immediate precursors to the large and small rRNAs (23S and 16S). Processes some mRNAs, and tRNAs when they are encoded in the rRNA operon. Processes pre-crRNA and tracrRNA of type II CRISPR loci if present in the organism.</text>
</comment>
<comment type="catalytic activity">
    <reaction evidence="1">
        <text>Endonucleolytic cleavage to 5'-phosphomonoester.</text>
        <dbReference type="EC" id="3.1.26.3"/>
    </reaction>
</comment>
<comment type="cofactor">
    <cofactor evidence="1">
        <name>Mg(2+)</name>
        <dbReference type="ChEBI" id="CHEBI:18420"/>
    </cofactor>
</comment>
<comment type="subunit">
    <text evidence="1">Homodimer.</text>
</comment>
<comment type="subcellular location">
    <subcellularLocation>
        <location evidence="1">Cytoplasm</location>
    </subcellularLocation>
</comment>
<comment type="similarity">
    <text evidence="1">Belongs to the ribonuclease III family.</text>
</comment>
<protein>
    <recommendedName>
        <fullName evidence="1">Ribonuclease 3</fullName>
        <ecNumber evidence="1">3.1.26.3</ecNumber>
    </recommendedName>
    <alternativeName>
        <fullName evidence="1">Ribonuclease III</fullName>
        <shortName evidence="1">RNase III</shortName>
    </alternativeName>
</protein>
<accession>B0TXH8</accession>
<evidence type="ECO:0000255" key="1">
    <source>
        <dbReference type="HAMAP-Rule" id="MF_00104"/>
    </source>
</evidence>
<name>RNC_FRAP2</name>
<gene>
    <name evidence="1" type="primary">rnc</name>
    <name type="ordered locus">Fphi_1211</name>
</gene>
<dbReference type="EC" id="3.1.26.3" evidence="1"/>
<dbReference type="EMBL" id="CP000937">
    <property type="protein sequence ID" value="ABZ87436.1"/>
    <property type="molecule type" value="Genomic_DNA"/>
</dbReference>
<dbReference type="SMR" id="B0TXH8"/>
<dbReference type="KEGG" id="fph:Fphi_1211"/>
<dbReference type="eggNOG" id="COG0571">
    <property type="taxonomic scope" value="Bacteria"/>
</dbReference>
<dbReference type="HOGENOM" id="CLU_000907_1_1_6"/>
<dbReference type="GO" id="GO:0005737">
    <property type="term" value="C:cytoplasm"/>
    <property type="evidence" value="ECO:0007669"/>
    <property type="project" value="UniProtKB-SubCell"/>
</dbReference>
<dbReference type="GO" id="GO:0003725">
    <property type="term" value="F:double-stranded RNA binding"/>
    <property type="evidence" value="ECO:0007669"/>
    <property type="project" value="TreeGrafter"/>
</dbReference>
<dbReference type="GO" id="GO:0046872">
    <property type="term" value="F:metal ion binding"/>
    <property type="evidence" value="ECO:0007669"/>
    <property type="project" value="UniProtKB-KW"/>
</dbReference>
<dbReference type="GO" id="GO:0004525">
    <property type="term" value="F:ribonuclease III activity"/>
    <property type="evidence" value="ECO:0007669"/>
    <property type="project" value="UniProtKB-UniRule"/>
</dbReference>
<dbReference type="GO" id="GO:0019843">
    <property type="term" value="F:rRNA binding"/>
    <property type="evidence" value="ECO:0007669"/>
    <property type="project" value="UniProtKB-KW"/>
</dbReference>
<dbReference type="GO" id="GO:0006397">
    <property type="term" value="P:mRNA processing"/>
    <property type="evidence" value="ECO:0007669"/>
    <property type="project" value="UniProtKB-UniRule"/>
</dbReference>
<dbReference type="GO" id="GO:0010468">
    <property type="term" value="P:regulation of gene expression"/>
    <property type="evidence" value="ECO:0007669"/>
    <property type="project" value="TreeGrafter"/>
</dbReference>
<dbReference type="GO" id="GO:0006364">
    <property type="term" value="P:rRNA processing"/>
    <property type="evidence" value="ECO:0007669"/>
    <property type="project" value="UniProtKB-UniRule"/>
</dbReference>
<dbReference type="GO" id="GO:0008033">
    <property type="term" value="P:tRNA processing"/>
    <property type="evidence" value="ECO:0007669"/>
    <property type="project" value="UniProtKB-KW"/>
</dbReference>
<dbReference type="CDD" id="cd10845">
    <property type="entry name" value="DSRM_RNAse_III_family"/>
    <property type="match status" value="1"/>
</dbReference>
<dbReference type="CDD" id="cd00593">
    <property type="entry name" value="RIBOc"/>
    <property type="match status" value="1"/>
</dbReference>
<dbReference type="FunFam" id="1.10.1520.10:FF:000001">
    <property type="entry name" value="Ribonuclease 3"/>
    <property type="match status" value="1"/>
</dbReference>
<dbReference type="Gene3D" id="3.30.160.20">
    <property type="match status" value="1"/>
</dbReference>
<dbReference type="Gene3D" id="1.10.1520.10">
    <property type="entry name" value="Ribonuclease III domain"/>
    <property type="match status" value="1"/>
</dbReference>
<dbReference type="HAMAP" id="MF_00104">
    <property type="entry name" value="RNase_III"/>
    <property type="match status" value="1"/>
</dbReference>
<dbReference type="InterPro" id="IPR014720">
    <property type="entry name" value="dsRBD_dom"/>
</dbReference>
<dbReference type="InterPro" id="IPR011907">
    <property type="entry name" value="RNase_III"/>
</dbReference>
<dbReference type="InterPro" id="IPR000999">
    <property type="entry name" value="RNase_III_dom"/>
</dbReference>
<dbReference type="InterPro" id="IPR036389">
    <property type="entry name" value="RNase_III_sf"/>
</dbReference>
<dbReference type="NCBIfam" id="TIGR02191">
    <property type="entry name" value="RNaseIII"/>
    <property type="match status" value="1"/>
</dbReference>
<dbReference type="PANTHER" id="PTHR11207:SF0">
    <property type="entry name" value="RIBONUCLEASE 3"/>
    <property type="match status" value="1"/>
</dbReference>
<dbReference type="PANTHER" id="PTHR11207">
    <property type="entry name" value="RIBONUCLEASE III"/>
    <property type="match status" value="1"/>
</dbReference>
<dbReference type="Pfam" id="PF00035">
    <property type="entry name" value="dsrm"/>
    <property type="match status" value="1"/>
</dbReference>
<dbReference type="Pfam" id="PF14622">
    <property type="entry name" value="Ribonucleas_3_3"/>
    <property type="match status" value="1"/>
</dbReference>
<dbReference type="SMART" id="SM00358">
    <property type="entry name" value="DSRM"/>
    <property type="match status" value="1"/>
</dbReference>
<dbReference type="SMART" id="SM00535">
    <property type="entry name" value="RIBOc"/>
    <property type="match status" value="1"/>
</dbReference>
<dbReference type="SUPFAM" id="SSF54768">
    <property type="entry name" value="dsRNA-binding domain-like"/>
    <property type="match status" value="1"/>
</dbReference>
<dbReference type="SUPFAM" id="SSF69065">
    <property type="entry name" value="RNase III domain-like"/>
    <property type="match status" value="1"/>
</dbReference>
<dbReference type="PROSITE" id="PS50137">
    <property type="entry name" value="DS_RBD"/>
    <property type="match status" value="1"/>
</dbReference>
<dbReference type="PROSITE" id="PS00517">
    <property type="entry name" value="RNASE_3_1"/>
    <property type="match status" value="1"/>
</dbReference>
<dbReference type="PROSITE" id="PS50142">
    <property type="entry name" value="RNASE_3_2"/>
    <property type="match status" value="1"/>
</dbReference>
<feature type="chain" id="PRO_1000075753" description="Ribonuclease 3">
    <location>
        <begin position="1"/>
        <end position="230"/>
    </location>
</feature>
<feature type="domain" description="RNase III" evidence="1">
    <location>
        <begin position="5"/>
        <end position="125"/>
    </location>
</feature>
<feature type="domain" description="DRBM" evidence="1">
    <location>
        <begin position="153"/>
        <end position="223"/>
    </location>
</feature>
<feature type="active site" evidence="1">
    <location>
        <position position="44"/>
    </location>
</feature>
<feature type="active site" evidence="1">
    <location>
        <position position="114"/>
    </location>
</feature>
<feature type="binding site" evidence="1">
    <location>
        <position position="40"/>
    </location>
    <ligand>
        <name>Mg(2+)</name>
        <dbReference type="ChEBI" id="CHEBI:18420"/>
    </ligand>
</feature>
<feature type="binding site" evidence="1">
    <location>
        <position position="111"/>
    </location>
    <ligand>
        <name>Mg(2+)</name>
        <dbReference type="ChEBI" id="CHEBI:18420"/>
    </ligand>
</feature>
<feature type="binding site" evidence="1">
    <location>
        <position position="114"/>
    </location>
    <ligand>
        <name>Mg(2+)</name>
        <dbReference type="ChEBI" id="CHEBI:18420"/>
    </ligand>
</feature>